<accession>Q12676</accession>
<accession>D6VZT6</accession>
<dbReference type="EC" id="6.3.2.12" evidence="6"/>
<dbReference type="EMBL" id="Z49702">
    <property type="protein sequence ID" value="CAA89750.1"/>
    <property type="molecule type" value="Genomic_DNA"/>
</dbReference>
<dbReference type="EMBL" id="BK006946">
    <property type="protein sequence ID" value="DAA10010.1"/>
    <property type="molecule type" value="Genomic_DNA"/>
</dbReference>
<dbReference type="PIR" id="S54574">
    <property type="entry name" value="S54574"/>
</dbReference>
<dbReference type="RefSeq" id="NP_013831.1">
    <property type="nucleotide sequence ID" value="NM_001182613.1"/>
</dbReference>
<dbReference type="SMR" id="Q12676"/>
<dbReference type="BioGRID" id="35289">
    <property type="interactions" value="10"/>
</dbReference>
<dbReference type="FunCoup" id="Q12676">
    <property type="interactions" value="214"/>
</dbReference>
<dbReference type="IntAct" id="Q12676">
    <property type="interactions" value="2"/>
</dbReference>
<dbReference type="MINT" id="Q12676"/>
<dbReference type="STRING" id="4932.YMR113W"/>
<dbReference type="iPTMnet" id="Q12676"/>
<dbReference type="PaxDb" id="4932-YMR113W"/>
<dbReference type="PeptideAtlas" id="Q12676"/>
<dbReference type="EnsemblFungi" id="YMR113W_mRNA">
    <property type="protein sequence ID" value="YMR113W"/>
    <property type="gene ID" value="YMR113W"/>
</dbReference>
<dbReference type="GeneID" id="855140"/>
<dbReference type="KEGG" id="sce:YMR113W"/>
<dbReference type="AGR" id="SGD:S000004719"/>
<dbReference type="SGD" id="S000004719">
    <property type="gene designation" value="FOL3"/>
</dbReference>
<dbReference type="VEuPathDB" id="FungiDB:YMR113W"/>
<dbReference type="eggNOG" id="KOG2525">
    <property type="taxonomic scope" value="Eukaryota"/>
</dbReference>
<dbReference type="GeneTree" id="ENSGT00390000016526"/>
<dbReference type="HOGENOM" id="CLU_015869_2_0_1"/>
<dbReference type="InParanoid" id="Q12676"/>
<dbReference type="OMA" id="NENYLVY"/>
<dbReference type="OrthoDB" id="5212574at2759"/>
<dbReference type="BioCyc" id="YEAST:YMR113W-MONOMER"/>
<dbReference type="UniPathway" id="UPA00850"/>
<dbReference type="BioGRID-ORCS" id="855140">
    <property type="hits" value="5 hits in 10 CRISPR screens"/>
</dbReference>
<dbReference type="PRO" id="PR:Q12676"/>
<dbReference type="Proteomes" id="UP000002311">
    <property type="component" value="Chromosome XIII"/>
</dbReference>
<dbReference type="RNAct" id="Q12676">
    <property type="molecule type" value="protein"/>
</dbReference>
<dbReference type="GO" id="GO:0005737">
    <property type="term" value="C:cytoplasm"/>
    <property type="evidence" value="ECO:0007005"/>
    <property type="project" value="SGD"/>
</dbReference>
<dbReference type="GO" id="GO:0005829">
    <property type="term" value="C:cytosol"/>
    <property type="evidence" value="ECO:0000318"/>
    <property type="project" value="GO_Central"/>
</dbReference>
<dbReference type="GO" id="GO:0005739">
    <property type="term" value="C:mitochondrion"/>
    <property type="evidence" value="ECO:0000318"/>
    <property type="project" value="GO_Central"/>
</dbReference>
<dbReference type="GO" id="GO:0005524">
    <property type="term" value="F:ATP binding"/>
    <property type="evidence" value="ECO:0007669"/>
    <property type="project" value="UniProtKB-KW"/>
</dbReference>
<dbReference type="GO" id="GO:0008841">
    <property type="term" value="F:dihydrofolate synthase activity"/>
    <property type="evidence" value="ECO:0000315"/>
    <property type="project" value="SGD"/>
</dbReference>
<dbReference type="GO" id="GO:0046872">
    <property type="term" value="F:metal ion binding"/>
    <property type="evidence" value="ECO:0007669"/>
    <property type="project" value="UniProtKB-KW"/>
</dbReference>
<dbReference type="GO" id="GO:0004326">
    <property type="term" value="F:tetrahydrofolylpolyglutamate synthase activity"/>
    <property type="evidence" value="ECO:0000318"/>
    <property type="project" value="GO_Central"/>
</dbReference>
<dbReference type="GO" id="GO:0009396">
    <property type="term" value="P:folic acid-containing compound biosynthetic process"/>
    <property type="evidence" value="ECO:0000315"/>
    <property type="project" value="SGD"/>
</dbReference>
<dbReference type="GO" id="GO:0006730">
    <property type="term" value="P:one-carbon metabolic process"/>
    <property type="evidence" value="ECO:0007669"/>
    <property type="project" value="UniProtKB-KW"/>
</dbReference>
<dbReference type="FunFam" id="3.40.1190.10:FF:000010">
    <property type="entry name" value="Dihydrofolate synthetase"/>
    <property type="match status" value="1"/>
</dbReference>
<dbReference type="FunFam" id="3.90.190.20:FF:000010">
    <property type="entry name" value="Dihydrofolate synthetase"/>
    <property type="match status" value="1"/>
</dbReference>
<dbReference type="Gene3D" id="3.90.190.20">
    <property type="entry name" value="Mur ligase, C-terminal domain"/>
    <property type="match status" value="1"/>
</dbReference>
<dbReference type="Gene3D" id="3.40.1190.10">
    <property type="entry name" value="Mur-like, catalytic domain"/>
    <property type="match status" value="1"/>
</dbReference>
<dbReference type="InterPro" id="IPR001645">
    <property type="entry name" value="Folylpolyglutamate_synth"/>
</dbReference>
<dbReference type="InterPro" id="IPR018109">
    <property type="entry name" value="Folylpolyglutamate_synth_CS"/>
</dbReference>
<dbReference type="InterPro" id="IPR036565">
    <property type="entry name" value="Mur-like_cat_sf"/>
</dbReference>
<dbReference type="InterPro" id="IPR004101">
    <property type="entry name" value="Mur_ligase_C"/>
</dbReference>
<dbReference type="InterPro" id="IPR036615">
    <property type="entry name" value="Mur_ligase_C_dom_sf"/>
</dbReference>
<dbReference type="NCBIfam" id="TIGR01499">
    <property type="entry name" value="folC"/>
    <property type="match status" value="1"/>
</dbReference>
<dbReference type="PANTHER" id="PTHR11136:SF0">
    <property type="entry name" value="DIHYDROFOLATE SYNTHETASE-RELATED"/>
    <property type="match status" value="1"/>
</dbReference>
<dbReference type="PANTHER" id="PTHR11136">
    <property type="entry name" value="FOLYLPOLYGLUTAMATE SYNTHASE-RELATED"/>
    <property type="match status" value="1"/>
</dbReference>
<dbReference type="Pfam" id="PF02875">
    <property type="entry name" value="Mur_ligase_C"/>
    <property type="match status" value="1"/>
</dbReference>
<dbReference type="PIRSF" id="PIRSF001563">
    <property type="entry name" value="Folylpolyglu_synth"/>
    <property type="match status" value="1"/>
</dbReference>
<dbReference type="SUPFAM" id="SSF53623">
    <property type="entry name" value="MurD-like peptide ligases, catalytic domain"/>
    <property type="match status" value="1"/>
</dbReference>
<dbReference type="SUPFAM" id="SSF53244">
    <property type="entry name" value="MurD-like peptide ligases, peptide-binding domain"/>
    <property type="match status" value="1"/>
</dbReference>
<dbReference type="PROSITE" id="PS01011">
    <property type="entry name" value="FOLYLPOLYGLU_SYNT_1"/>
    <property type="match status" value="1"/>
</dbReference>
<dbReference type="PROSITE" id="PS01012">
    <property type="entry name" value="FOLYLPOLYGLU_SYNT_2"/>
    <property type="match status" value="1"/>
</dbReference>
<sequence length="427" mass="47851">MAIELGLSRITKLLEHLGNPQNSLRVLHIAGTNGKGSVCTYLSSVLQQKSYQIGKFTTPHLVHVTDSITINNKPIPLERYQNIRLQLEALNKSHSLKCTEFELLTCTAFKYFYDVQCQWCVIEVGLGGRLDATNVIPGANKACCGITKISLDHESFLGNTLSEISKEKAGIITEGVPFTVIDGTNEASVINVVKERCKALGSELSVTDSQLNGNMIDTNSWGCFDLAKLPLNGEYQIFNLRVAMGMLDYLQMNELIDITKNEVSTRLAKVDWPGRLYRMDYRFDKVSNRTVPILMDGAHNGSAAVELVKYLRKEYGNQPLTFVMAVTHGKNLEPLLQPLLRPIDQVILTRFNNVEGMPWIHATDPEEIKDFILTQGYTKEIVIENDLHQVLPSLAHVSDEQRRPIVVCGSLYLCGELLRIHNSHLRN</sequence>
<comment type="function">
    <text evidence="2">Glutamate-adding enzyme which catalyzes the binding of the first glutamyl side chain to dihydropteroate. Leads to the de nove synthesis of tetrahydrofolate.</text>
</comment>
<comment type="catalytic activity">
    <reaction evidence="6">
        <text>7,8-dihydropteroate + L-glutamate + ATP = 7,8-dihydrofolate + ADP + phosphate + H(+)</text>
        <dbReference type="Rhea" id="RHEA:23584"/>
        <dbReference type="ChEBI" id="CHEBI:15378"/>
        <dbReference type="ChEBI" id="CHEBI:17839"/>
        <dbReference type="ChEBI" id="CHEBI:29985"/>
        <dbReference type="ChEBI" id="CHEBI:30616"/>
        <dbReference type="ChEBI" id="CHEBI:43474"/>
        <dbReference type="ChEBI" id="CHEBI:57451"/>
        <dbReference type="ChEBI" id="CHEBI:456216"/>
        <dbReference type="EC" id="6.3.2.12"/>
    </reaction>
    <physiologicalReaction direction="left-to-right" evidence="6">
        <dbReference type="Rhea" id="RHEA:23585"/>
    </physiologicalReaction>
</comment>
<comment type="pathway">
    <text>Cofactor biosynthesis; tetrahydrofolylpolyglutamate biosynthesis.</text>
</comment>
<comment type="subcellular location">
    <subcellularLocation>
        <location evidence="3">Cytoplasm</location>
    </subcellularLocation>
</comment>
<comment type="miscellaneous">
    <text evidence="4">Present with 2340 molecules/cell in log phase SD medium.</text>
</comment>
<comment type="similarity">
    <text evidence="5">Belongs to the folylpolyglutamate synthase family.</text>
</comment>
<evidence type="ECO:0000250" key="1">
    <source>
        <dbReference type="UniProtKB" id="P08192"/>
    </source>
</evidence>
<evidence type="ECO:0000269" key="2">
    <source>
    </source>
</evidence>
<evidence type="ECO:0000269" key="3">
    <source>
    </source>
</evidence>
<evidence type="ECO:0000269" key="4">
    <source>
    </source>
</evidence>
<evidence type="ECO:0000305" key="5"/>
<evidence type="ECO:0000305" key="6">
    <source>
    </source>
</evidence>
<reference key="1">
    <citation type="journal article" date="1997" name="Nature">
        <title>The nucleotide sequence of Saccharomyces cerevisiae chromosome XIII.</title>
        <authorList>
            <person name="Bowman S."/>
            <person name="Churcher C.M."/>
            <person name="Badcock K."/>
            <person name="Brown D."/>
            <person name="Chillingworth T."/>
            <person name="Connor R."/>
            <person name="Dedman K."/>
            <person name="Devlin K."/>
            <person name="Gentles S."/>
            <person name="Hamlin N."/>
            <person name="Hunt S."/>
            <person name="Jagels K."/>
            <person name="Lye G."/>
            <person name="Moule S."/>
            <person name="Odell C."/>
            <person name="Pearson D."/>
            <person name="Rajandream M.A."/>
            <person name="Rice P."/>
            <person name="Skelton J."/>
            <person name="Walsh S.V."/>
            <person name="Whitehead S."/>
            <person name="Barrell B.G."/>
        </authorList>
    </citation>
    <scope>NUCLEOTIDE SEQUENCE [LARGE SCALE GENOMIC DNA]</scope>
    <source>
        <strain>ATCC 204508 / S288c</strain>
    </source>
</reference>
<reference key="2">
    <citation type="journal article" date="2014" name="G3 (Bethesda)">
        <title>The reference genome sequence of Saccharomyces cerevisiae: Then and now.</title>
        <authorList>
            <person name="Engel S.R."/>
            <person name="Dietrich F.S."/>
            <person name="Fisk D.G."/>
            <person name="Binkley G."/>
            <person name="Balakrishnan R."/>
            <person name="Costanzo M.C."/>
            <person name="Dwight S.S."/>
            <person name="Hitz B.C."/>
            <person name="Karra K."/>
            <person name="Nash R.S."/>
            <person name="Weng S."/>
            <person name="Wong E.D."/>
            <person name="Lloyd P."/>
            <person name="Skrzypek M.S."/>
            <person name="Miyasato S.R."/>
            <person name="Simison M."/>
            <person name="Cherry J.M."/>
        </authorList>
    </citation>
    <scope>GENOME REANNOTATION</scope>
    <source>
        <strain>ATCC 204508 / S288c</strain>
    </source>
</reference>
<reference key="3">
    <citation type="journal article" date="2000" name="J. Biol. Chem.">
        <title>Polyglutamylation of folate coenzymes is necessary for methionine biosynthesis and maintenance of intact mitochondrial genome in Saccharomyces cerevisiae.</title>
        <authorList>
            <person name="Cherest H."/>
            <person name="Thomas D."/>
            <person name="Surdin-Kerjan Y."/>
        </authorList>
    </citation>
    <scope>CHARACTERIZATION</scope>
</reference>
<reference key="4">
    <citation type="journal article" date="2001" name="FEMS Microbiol. Lett.">
        <title>Folic acid utilisation related to sulfa drug resistance in Saccharomyces cerevisiae.</title>
        <authorList>
            <person name="Bayly A.M."/>
            <person name="Berglez J.M."/>
            <person name="Patel O."/>
            <person name="Castelli L.A."/>
            <person name="Hankins E.G."/>
            <person name="Coloe P."/>
            <person name="Hopkins Sibley C."/>
            <person name="Macreadie I.G."/>
        </authorList>
    </citation>
    <scope>FUNCTION</scope>
    <scope>CATALYTIC ACTIVITY</scope>
</reference>
<reference key="5">
    <citation type="journal article" date="2003" name="Nature">
        <title>Global analysis of protein localization in budding yeast.</title>
        <authorList>
            <person name="Huh W.-K."/>
            <person name="Falvo J.V."/>
            <person name="Gerke L.C."/>
            <person name="Carroll A.S."/>
            <person name="Howson R.W."/>
            <person name="Weissman J.S."/>
            <person name="O'Shea E.K."/>
        </authorList>
    </citation>
    <scope>SUBCELLULAR LOCATION [LARGE SCALE ANALYSIS]</scope>
</reference>
<reference key="6">
    <citation type="journal article" date="2003" name="Nature">
        <title>Global analysis of protein expression in yeast.</title>
        <authorList>
            <person name="Ghaemmaghami S."/>
            <person name="Huh W.-K."/>
            <person name="Bower K."/>
            <person name="Howson R.W."/>
            <person name="Belle A."/>
            <person name="Dephoure N."/>
            <person name="O'Shea E.K."/>
            <person name="Weissman J.S."/>
        </authorList>
    </citation>
    <scope>LEVEL OF PROTEIN EXPRESSION [LARGE SCALE ANALYSIS]</scope>
</reference>
<reference key="7">
    <citation type="journal article" date="2012" name="Proc. Natl. Acad. Sci. U.S.A.">
        <title>N-terminal acetylome analyses and functional insights of the N-terminal acetyltransferase NatB.</title>
        <authorList>
            <person name="Van Damme P."/>
            <person name="Lasa M."/>
            <person name="Polevoda B."/>
            <person name="Gazquez C."/>
            <person name="Elosegui-Artola A."/>
            <person name="Kim D.S."/>
            <person name="De Juan-Pardo E."/>
            <person name="Demeyer K."/>
            <person name="Hole K."/>
            <person name="Larrea E."/>
            <person name="Timmerman E."/>
            <person name="Prieto J."/>
            <person name="Arnesen T."/>
            <person name="Sherman F."/>
            <person name="Gevaert K."/>
            <person name="Aldabe R."/>
        </authorList>
    </citation>
    <scope>IDENTIFICATION BY MASS SPECTROMETRY [LARGE SCALE ANALYSIS]</scope>
</reference>
<gene>
    <name type="primary">FOL3</name>
    <name type="ordered locus">YMR113W</name>
    <name type="ORF">YM9718.12</name>
</gene>
<organism>
    <name type="scientific">Saccharomyces cerevisiae (strain ATCC 204508 / S288c)</name>
    <name type="common">Baker's yeast</name>
    <dbReference type="NCBI Taxonomy" id="559292"/>
    <lineage>
        <taxon>Eukaryota</taxon>
        <taxon>Fungi</taxon>
        <taxon>Dikarya</taxon>
        <taxon>Ascomycota</taxon>
        <taxon>Saccharomycotina</taxon>
        <taxon>Saccharomycetes</taxon>
        <taxon>Saccharomycetales</taxon>
        <taxon>Saccharomycetaceae</taxon>
        <taxon>Saccharomyces</taxon>
    </lineage>
</organism>
<proteinExistence type="evidence at protein level"/>
<keyword id="KW-0067">ATP-binding</keyword>
<keyword id="KW-0963">Cytoplasm</keyword>
<keyword id="KW-0436">Ligase</keyword>
<keyword id="KW-0460">Magnesium</keyword>
<keyword id="KW-0479">Metal-binding</keyword>
<keyword id="KW-0547">Nucleotide-binding</keyword>
<keyword id="KW-0554">One-carbon metabolism</keyword>
<keyword id="KW-1185">Reference proteome</keyword>
<protein>
    <recommendedName>
        <fullName>Dihydrofolate synthetase</fullName>
        <shortName>DHFS</shortName>
        <ecNumber evidence="6">6.3.2.12</ecNumber>
    </recommendedName>
</protein>
<feature type="chain" id="PRO_0000168308" description="Dihydrofolate synthetase">
    <location>
        <begin position="1"/>
        <end position="427"/>
    </location>
</feature>
<feature type="binding site" evidence="1">
    <location>
        <begin position="34"/>
        <end position="37"/>
    </location>
    <ligand>
        <name>ATP</name>
        <dbReference type="ChEBI" id="CHEBI:30616"/>
    </ligand>
</feature>
<feature type="binding site" evidence="1">
    <location>
        <position position="123"/>
    </location>
    <ligand>
        <name>Mg(2+)</name>
        <dbReference type="ChEBI" id="CHEBI:18420"/>
        <label>1</label>
    </ligand>
</feature>
<feature type="binding site" evidence="1">
    <location>
        <position position="153"/>
    </location>
    <ligand>
        <name>Mg(2+)</name>
        <dbReference type="ChEBI" id="CHEBI:18420"/>
        <label>2</label>
    </ligand>
</feature>
<feature type="binding site" evidence="1">
    <location>
        <position position="275"/>
    </location>
    <ligand>
        <name>ATP</name>
        <dbReference type="ChEBI" id="CHEBI:30616"/>
    </ligand>
</feature>
<feature type="binding site" evidence="1">
    <location>
        <position position="296"/>
    </location>
    <ligand>
        <name>ATP</name>
        <dbReference type="ChEBI" id="CHEBI:30616"/>
    </ligand>
</feature>
<name>FOLD_YEAST</name>